<feature type="chain" id="PRO_0000391981" description="Ubiquitin-fold modifier-conjugating enzyme 1">
    <location>
        <begin position="1"/>
        <end position="185"/>
    </location>
</feature>
<feature type="active site" description="Glycyl thioester intermediate" evidence="1">
    <location>
        <position position="119"/>
    </location>
</feature>
<sequence length="185" mass="20464">MEGWDKGTKSVVGEIPLLSTRAGPRDGEAWRQRLKEEYRALIAYTSVNKSKDNDWFRISAANPEGTRWEGTCWYVHNLRRYEFPLQFDIPVAYPQVAPEIELPTLDGKTHKMYRGGKICLTVHFKPLWAKNCPRFGIAHALCLGLAPWLAAEVPILVDSGMVKHKDDEAAPADAAAAASGSAAAS</sequence>
<evidence type="ECO:0000250" key="1"/>
<evidence type="ECO:0000305" key="2"/>
<gene>
    <name type="ordered locus">Os10g0205200</name>
    <name type="ordered locus">LOC_Os10g13800</name>
    <name type="ORF">OSJNBb0048O22.2</name>
</gene>
<name>UFC1_ORYSJ</name>
<keyword id="KW-1185">Reference proteome</keyword>
<keyword id="KW-0833">Ubl conjugation pathway</keyword>
<reference key="1">
    <citation type="journal article" date="2003" name="Science">
        <title>In-depth view of structure, activity, and evolution of rice chromosome 10.</title>
        <authorList>
            <person name="Yu Y."/>
            <person name="Rambo T."/>
            <person name="Currie J."/>
            <person name="Saski C."/>
            <person name="Kim H.-R."/>
            <person name="Collura K."/>
            <person name="Thompson S."/>
            <person name="Simmons J."/>
            <person name="Yang T.-J."/>
            <person name="Nah G."/>
            <person name="Patel A.J."/>
            <person name="Thurmond S."/>
            <person name="Henry D."/>
            <person name="Oates R."/>
            <person name="Palmer M."/>
            <person name="Pries G."/>
            <person name="Gibson J."/>
            <person name="Anderson H."/>
            <person name="Paradkar M."/>
            <person name="Crane L."/>
            <person name="Dale J."/>
            <person name="Carver M.B."/>
            <person name="Wood T."/>
            <person name="Frisch D."/>
            <person name="Engler F."/>
            <person name="Soderlund C."/>
            <person name="Palmer L.E."/>
            <person name="Teytelman L."/>
            <person name="Nascimento L."/>
            <person name="De la Bastide M."/>
            <person name="Spiegel L."/>
            <person name="Ware D."/>
            <person name="O'Shaughnessy A."/>
            <person name="Dike S."/>
            <person name="Dedhia N."/>
            <person name="Preston R."/>
            <person name="Huang E."/>
            <person name="Ferraro K."/>
            <person name="Kuit K."/>
            <person name="Miller B."/>
            <person name="Zutavern T."/>
            <person name="Katzenberger F."/>
            <person name="Muller S."/>
            <person name="Balija V."/>
            <person name="Martienssen R.A."/>
            <person name="Stein L."/>
            <person name="Minx P."/>
            <person name="Johnson D."/>
            <person name="Cordum H."/>
            <person name="Mardis E."/>
            <person name="Cheng Z."/>
            <person name="Jiang J."/>
            <person name="Wilson R."/>
            <person name="McCombie W.R."/>
            <person name="Wing R.A."/>
            <person name="Yuan Q."/>
            <person name="Ouyang S."/>
            <person name="Liu J."/>
            <person name="Jones K.M."/>
            <person name="Gansberger K."/>
            <person name="Moffat K."/>
            <person name="Hill J."/>
            <person name="Tsitrin T."/>
            <person name="Overton L."/>
            <person name="Bera J."/>
            <person name="Kim M."/>
            <person name="Jin S."/>
            <person name="Tallon L."/>
            <person name="Ciecko A."/>
            <person name="Pai G."/>
            <person name="Van Aken S."/>
            <person name="Utterback T."/>
            <person name="Reidmuller S."/>
            <person name="Bormann J."/>
            <person name="Feldblyum T."/>
            <person name="Hsiao J."/>
            <person name="Zismann V."/>
            <person name="Blunt S."/>
            <person name="de Vazeille A.R."/>
            <person name="Shaffer T."/>
            <person name="Koo H."/>
            <person name="Suh B."/>
            <person name="Yang Q."/>
            <person name="Haas B."/>
            <person name="Peterson J."/>
            <person name="Pertea M."/>
            <person name="Volfovsky N."/>
            <person name="Wortman J."/>
            <person name="White O."/>
            <person name="Salzberg S.L."/>
            <person name="Fraser C.M."/>
            <person name="Buell C.R."/>
            <person name="Messing J."/>
            <person name="Song R."/>
            <person name="Fuks G."/>
            <person name="Llaca V."/>
            <person name="Kovchak S."/>
            <person name="Young S."/>
            <person name="Bowers J.E."/>
            <person name="Paterson A.H."/>
            <person name="Johns M.A."/>
            <person name="Mao L."/>
            <person name="Pan H."/>
            <person name="Dean R.A."/>
        </authorList>
    </citation>
    <scope>NUCLEOTIDE SEQUENCE [LARGE SCALE GENOMIC DNA]</scope>
    <source>
        <strain>cv. Nipponbare</strain>
    </source>
</reference>
<reference key="2">
    <citation type="journal article" date="2005" name="Nature">
        <title>The map-based sequence of the rice genome.</title>
        <authorList>
            <consortium name="International rice genome sequencing project (IRGSP)"/>
        </authorList>
    </citation>
    <scope>NUCLEOTIDE SEQUENCE [LARGE SCALE GENOMIC DNA]</scope>
    <source>
        <strain>cv. Nipponbare</strain>
    </source>
</reference>
<reference key="3">
    <citation type="journal article" date="2008" name="Nucleic Acids Res.">
        <title>The rice annotation project database (RAP-DB): 2008 update.</title>
        <authorList>
            <consortium name="The rice annotation project (RAP)"/>
        </authorList>
    </citation>
    <scope>GENOME REANNOTATION</scope>
    <source>
        <strain>cv. Nipponbare</strain>
    </source>
</reference>
<reference key="4">
    <citation type="journal article" date="2013" name="Rice">
        <title>Improvement of the Oryza sativa Nipponbare reference genome using next generation sequence and optical map data.</title>
        <authorList>
            <person name="Kawahara Y."/>
            <person name="de la Bastide M."/>
            <person name="Hamilton J.P."/>
            <person name="Kanamori H."/>
            <person name="McCombie W.R."/>
            <person name="Ouyang S."/>
            <person name="Schwartz D.C."/>
            <person name="Tanaka T."/>
            <person name="Wu J."/>
            <person name="Zhou S."/>
            <person name="Childs K.L."/>
            <person name="Davidson R.M."/>
            <person name="Lin H."/>
            <person name="Quesada-Ocampo L."/>
            <person name="Vaillancourt B."/>
            <person name="Sakai H."/>
            <person name="Lee S.S."/>
            <person name="Kim J."/>
            <person name="Numa H."/>
            <person name="Itoh T."/>
            <person name="Buell C.R."/>
            <person name="Matsumoto T."/>
        </authorList>
    </citation>
    <scope>GENOME REANNOTATION</scope>
    <source>
        <strain>cv. Nipponbare</strain>
    </source>
</reference>
<reference key="5">
    <citation type="journal article" date="2003" name="Science">
        <title>Collection, mapping, and annotation of over 28,000 cDNA clones from japonica rice.</title>
        <authorList>
            <consortium name="The rice full-length cDNA consortium"/>
        </authorList>
    </citation>
    <scope>NUCLEOTIDE SEQUENCE [LARGE SCALE MRNA]</scope>
    <source>
        <strain>cv. Nipponbare</strain>
    </source>
</reference>
<comment type="function">
    <text evidence="1">E2-like enzyme which forms an intermediate with UFM1 via a thioester linkage.</text>
</comment>
<comment type="similarity">
    <text evidence="2">Belongs to the ubiquitin-conjugating enzyme family. UFC1 subfamily.</text>
</comment>
<protein>
    <recommendedName>
        <fullName>Ubiquitin-fold modifier-conjugating enzyme 1</fullName>
    </recommendedName>
    <alternativeName>
        <fullName>Ufm1-conjugating enzyme 1</fullName>
    </alternativeName>
</protein>
<accession>Q8S625</accession>
<accession>H2KX88</accession>
<organism>
    <name type="scientific">Oryza sativa subsp. japonica</name>
    <name type="common">Rice</name>
    <dbReference type="NCBI Taxonomy" id="39947"/>
    <lineage>
        <taxon>Eukaryota</taxon>
        <taxon>Viridiplantae</taxon>
        <taxon>Streptophyta</taxon>
        <taxon>Embryophyta</taxon>
        <taxon>Tracheophyta</taxon>
        <taxon>Spermatophyta</taxon>
        <taxon>Magnoliopsida</taxon>
        <taxon>Liliopsida</taxon>
        <taxon>Poales</taxon>
        <taxon>Poaceae</taxon>
        <taxon>BOP clade</taxon>
        <taxon>Oryzoideae</taxon>
        <taxon>Oryzeae</taxon>
        <taxon>Oryzinae</taxon>
        <taxon>Oryza</taxon>
        <taxon>Oryza sativa</taxon>
    </lineage>
</organism>
<dbReference type="EMBL" id="AC099325">
    <property type="protein sequence ID" value="AAM18764.1"/>
    <property type="molecule type" value="Genomic_DNA"/>
</dbReference>
<dbReference type="EMBL" id="DP000086">
    <property type="protein sequence ID" value="AAP52725.1"/>
    <property type="molecule type" value="Genomic_DNA"/>
</dbReference>
<dbReference type="EMBL" id="DP000086">
    <property type="protein sequence ID" value="ABB47034.1"/>
    <property type="molecule type" value="Genomic_DNA"/>
</dbReference>
<dbReference type="EMBL" id="AP008216">
    <property type="protein sequence ID" value="BAF26223.1"/>
    <property type="molecule type" value="Genomic_DNA"/>
</dbReference>
<dbReference type="EMBL" id="AP014966">
    <property type="protein sequence ID" value="BAT10251.1"/>
    <property type="molecule type" value="Genomic_DNA"/>
</dbReference>
<dbReference type="EMBL" id="AK059551">
    <property type="protein sequence ID" value="BAG87029.1"/>
    <property type="molecule type" value="mRNA"/>
</dbReference>
<dbReference type="RefSeq" id="XP_015614638.1">
    <property type="nucleotide sequence ID" value="XM_015759152.1"/>
</dbReference>
<dbReference type="SMR" id="Q8S625"/>
<dbReference type="FunCoup" id="Q8S625">
    <property type="interactions" value="2739"/>
</dbReference>
<dbReference type="STRING" id="39947.Q8S625"/>
<dbReference type="PaxDb" id="39947-Q8S625"/>
<dbReference type="EnsemblPlants" id="Os10t0205200-01">
    <property type="protein sequence ID" value="Os10t0205200-01"/>
    <property type="gene ID" value="Os10g0205200"/>
</dbReference>
<dbReference type="EnsemblPlants" id="Os10t0205200-02">
    <property type="protein sequence ID" value="Os10t0205200-02"/>
    <property type="gene ID" value="Os10g0205200"/>
</dbReference>
<dbReference type="Gramene" id="Os10t0205200-01">
    <property type="protein sequence ID" value="Os10t0205200-01"/>
    <property type="gene ID" value="Os10g0205200"/>
</dbReference>
<dbReference type="Gramene" id="Os10t0205200-02">
    <property type="protein sequence ID" value="Os10t0205200-02"/>
    <property type="gene ID" value="Os10g0205200"/>
</dbReference>
<dbReference type="KEGG" id="dosa:Os10g0205200"/>
<dbReference type="eggNOG" id="KOG3357">
    <property type="taxonomic scope" value="Eukaryota"/>
</dbReference>
<dbReference type="HOGENOM" id="CLU_101170_0_0_1"/>
<dbReference type="InParanoid" id="Q8S625"/>
<dbReference type="OMA" id="LWQKNVP"/>
<dbReference type="OrthoDB" id="10256182at2759"/>
<dbReference type="Proteomes" id="UP000000763">
    <property type="component" value="Chromosome 10"/>
</dbReference>
<dbReference type="Proteomes" id="UP000059680">
    <property type="component" value="Chromosome 10"/>
</dbReference>
<dbReference type="GO" id="GO:0061657">
    <property type="term" value="F:UFM1 conjugating enzyme activity"/>
    <property type="evidence" value="ECO:0007669"/>
    <property type="project" value="InterPro"/>
</dbReference>
<dbReference type="GO" id="GO:0071568">
    <property type="term" value="F:UFM1 transferase activity"/>
    <property type="evidence" value="ECO:0000318"/>
    <property type="project" value="GO_Central"/>
</dbReference>
<dbReference type="GO" id="GO:0071569">
    <property type="term" value="P:protein ufmylation"/>
    <property type="evidence" value="ECO:0007669"/>
    <property type="project" value="InterPro"/>
</dbReference>
<dbReference type="GO" id="GO:0034976">
    <property type="term" value="P:response to endoplasmic reticulum stress"/>
    <property type="evidence" value="ECO:0000318"/>
    <property type="project" value="GO_Central"/>
</dbReference>
<dbReference type="GO" id="GO:0061709">
    <property type="term" value="P:reticulophagy"/>
    <property type="evidence" value="ECO:0000318"/>
    <property type="project" value="GO_Central"/>
</dbReference>
<dbReference type="CDD" id="cd11686">
    <property type="entry name" value="UBCc_UFC1"/>
    <property type="match status" value="1"/>
</dbReference>
<dbReference type="FunFam" id="3.10.110.10:FF:000053">
    <property type="entry name" value="Ubiquitin-fold modifier-conjugating enzyme 1"/>
    <property type="match status" value="1"/>
</dbReference>
<dbReference type="Gene3D" id="3.10.110.10">
    <property type="entry name" value="Ubiquitin Conjugating Enzyme"/>
    <property type="match status" value="1"/>
</dbReference>
<dbReference type="InterPro" id="IPR016135">
    <property type="entry name" value="UBQ-conjugating_enzyme/RWD"/>
</dbReference>
<dbReference type="InterPro" id="IPR014806">
    <property type="entry name" value="Ufc1"/>
</dbReference>
<dbReference type="PANTHER" id="PTHR12921">
    <property type="entry name" value="UBIQUITIN-FOLD MODIFIER-CONJUGATING ENZYME 1"/>
    <property type="match status" value="1"/>
</dbReference>
<dbReference type="PANTHER" id="PTHR12921:SF0">
    <property type="entry name" value="UBIQUITIN-FOLD MODIFIER-CONJUGATING ENZYME 1"/>
    <property type="match status" value="1"/>
</dbReference>
<dbReference type="Pfam" id="PF08694">
    <property type="entry name" value="UFC1"/>
    <property type="match status" value="1"/>
</dbReference>
<dbReference type="PIRSF" id="PIRSF008716">
    <property type="entry name" value="DUF1782"/>
    <property type="match status" value="1"/>
</dbReference>
<dbReference type="SUPFAM" id="SSF54495">
    <property type="entry name" value="UBC-like"/>
    <property type="match status" value="1"/>
</dbReference>
<proteinExistence type="evidence at transcript level"/>